<keyword id="KW-0964">Secreted</keyword>
<keyword id="KW-0732">Signal</keyword>
<keyword id="KW-0843">Virulence</keyword>
<evidence type="ECO:0000250" key="1"/>
<evidence type="ECO:0000250" key="2">
    <source>
        <dbReference type="UniProtKB" id="A6QG59"/>
    </source>
</evidence>
<name>FIB_STAAN</name>
<organism>
    <name type="scientific">Staphylococcus aureus (strain N315)</name>
    <dbReference type="NCBI Taxonomy" id="158879"/>
    <lineage>
        <taxon>Bacteria</taxon>
        <taxon>Bacillati</taxon>
        <taxon>Bacillota</taxon>
        <taxon>Bacilli</taxon>
        <taxon>Bacillales</taxon>
        <taxon>Staphylococcaceae</taxon>
        <taxon>Staphylococcus</taxon>
    </lineage>
</organism>
<dbReference type="EMBL" id="BA000018">
    <property type="protein sequence ID" value="BAB42253.1"/>
    <property type="molecule type" value="Genomic_DNA"/>
</dbReference>
<dbReference type="RefSeq" id="WP_000791581.1">
    <property type="nucleotide sequence ID" value="NC_002745.2"/>
</dbReference>
<dbReference type="SMR" id="P68800"/>
<dbReference type="EnsemblBacteria" id="BAB42253">
    <property type="protein sequence ID" value="BAB42253"/>
    <property type="gene ID" value="BAB42253"/>
</dbReference>
<dbReference type="KEGG" id="sau:SA1003"/>
<dbReference type="HOGENOM" id="CLU_136810_0_0_9"/>
<dbReference type="PRO" id="PR:P68800"/>
<dbReference type="GO" id="GO:0005615">
    <property type="term" value="C:extracellular space"/>
    <property type="evidence" value="ECO:0007669"/>
    <property type="project" value="InterPro"/>
</dbReference>
<dbReference type="GO" id="GO:0001848">
    <property type="term" value="F:complement binding"/>
    <property type="evidence" value="ECO:0007669"/>
    <property type="project" value="InterPro"/>
</dbReference>
<dbReference type="FunFam" id="1.10.10.1270:FF:000001">
    <property type="entry name" value="Fibrinogen-binding protein"/>
    <property type="match status" value="1"/>
</dbReference>
<dbReference type="Gene3D" id="1.10.10.1270">
    <property type="entry name" value="Sbi, C3 binding domain IV"/>
    <property type="match status" value="1"/>
</dbReference>
<dbReference type="InterPro" id="IPR036233">
    <property type="entry name" value="Efb_C_sf"/>
</dbReference>
<dbReference type="InterPro" id="IPR021033">
    <property type="entry name" value="Extracellular_fibrinogen-bd_C"/>
</dbReference>
<dbReference type="InterPro" id="IPR041909">
    <property type="entry name" value="Sbi_C3_db_domIV"/>
</dbReference>
<dbReference type="Pfam" id="PF12199">
    <property type="entry name" value="efb-c"/>
    <property type="match status" value="1"/>
</dbReference>
<dbReference type="SUPFAM" id="SSF158366">
    <property type="entry name" value="Efb C-domain-like"/>
    <property type="match status" value="1"/>
</dbReference>
<comment type="function">
    <text evidence="2">Extracellular fibrinogen-binding protein that plays an important role in virulence. By interacting with the alpha chain of fibrinogen and its derivative fibrin, enhances a non-functional interaction between fibrinogen and platelets and is responsible for repression of fibrinogen-dependent platelet aggregation. In addition, assembles a fibrinogen protective shield around the bacteria which results in impaired phagocytic clearance by the host. Mechanistically, interacts with host complement C3b deposited on the surface of the bacterium via its C-terminal and then recruits fibrinogen via its N-terminal.</text>
</comment>
<comment type="subunit">
    <text evidence="2">Interacts with host fibrinogen alpha chain/FGA. Interacts with host complement protein C3.</text>
</comment>
<comment type="subcellular location">
    <subcellularLocation>
        <location evidence="2">Secreted</location>
    </subcellularLocation>
</comment>
<feature type="signal peptide" evidence="1">
    <location>
        <begin position="1"/>
        <end position="29"/>
    </location>
</feature>
<feature type="chain" id="PRO_0000021259" description="Fibrinogen-binding protein">
    <location>
        <begin position="30"/>
        <end position="165"/>
    </location>
</feature>
<reference key="1">
    <citation type="journal article" date="2001" name="Lancet">
        <title>Whole genome sequencing of meticillin-resistant Staphylococcus aureus.</title>
        <authorList>
            <person name="Kuroda M."/>
            <person name="Ohta T."/>
            <person name="Uchiyama I."/>
            <person name="Baba T."/>
            <person name="Yuzawa H."/>
            <person name="Kobayashi I."/>
            <person name="Cui L."/>
            <person name="Oguchi A."/>
            <person name="Aoki K."/>
            <person name="Nagai Y."/>
            <person name="Lian J.-Q."/>
            <person name="Ito T."/>
            <person name="Kanamori M."/>
            <person name="Matsumaru H."/>
            <person name="Maruyama A."/>
            <person name="Murakami H."/>
            <person name="Hosoyama A."/>
            <person name="Mizutani-Ui Y."/>
            <person name="Takahashi N.K."/>
            <person name="Sawano T."/>
            <person name="Inoue R."/>
            <person name="Kaito C."/>
            <person name="Sekimizu K."/>
            <person name="Hirakawa H."/>
            <person name="Kuhara S."/>
            <person name="Goto S."/>
            <person name="Yabuzaki J."/>
            <person name="Kanehisa M."/>
            <person name="Yamashita A."/>
            <person name="Oshima K."/>
            <person name="Furuya K."/>
            <person name="Yoshino C."/>
            <person name="Shiba T."/>
            <person name="Hattori M."/>
            <person name="Ogasawara N."/>
            <person name="Hayashi H."/>
            <person name="Hiramatsu K."/>
        </authorList>
    </citation>
    <scope>NUCLEOTIDE SEQUENCE [LARGE SCALE GENOMIC DNA]</scope>
    <source>
        <strain>N315</strain>
    </source>
</reference>
<reference key="2">
    <citation type="submission" date="2007-10" db="UniProtKB">
        <title>Shotgun proteomic analysis of total and membrane protein extracts of S. aureus strain N315.</title>
        <authorList>
            <person name="Vaezzadeh A.R."/>
            <person name="Deshusses J."/>
            <person name="Lescuyer P."/>
            <person name="Hochstrasser D.F."/>
        </authorList>
    </citation>
    <scope>IDENTIFICATION BY MASS SPECTROMETRY [LARGE SCALE ANALYSIS]</scope>
    <source>
        <strain>N315</strain>
    </source>
</reference>
<sequence length="165" mass="18793">MKNKLIAKSLLTIAAIGITTTTIASTADASEGYGPREKKPVSINHNIVEYNDGTFKYQSRPKFNSTPKYIKFKHDYNILEFNDGTFEYGARPQFNKPAAKTDATIKKEQKLIQAQNLVREFEKTHTVSAHRKAQKAVNLVSFEYKVKKMVLQERIDNVLKQGLVR</sequence>
<proteinExistence type="evidence at protein level"/>
<gene>
    <name type="primary">fib</name>
    <name type="synonym">efb</name>
    <name type="ordered locus">SA1003</name>
</gene>
<protein>
    <recommendedName>
        <fullName>Fibrinogen-binding protein</fullName>
    </recommendedName>
</protein>
<accession>P68800</accession>
<accession>Q08691</accession>